<feature type="chain" id="PRO_0000382763" description="26S proteasome regulatory subunit RPN1">
    <location>
        <begin position="1"/>
        <end position="795"/>
    </location>
</feature>
<feature type="repeat" description="PC 1">
    <location>
        <begin position="374"/>
        <end position="410"/>
    </location>
</feature>
<feature type="repeat" description="PC 2">
    <location>
        <begin position="411"/>
        <end position="445"/>
    </location>
</feature>
<feature type="repeat" description="PC 3">
    <location>
        <begin position="447"/>
        <end position="480"/>
    </location>
</feature>
<feature type="repeat" description="PC 4">
    <location>
        <begin position="624"/>
        <end position="658"/>
    </location>
</feature>
<organism>
    <name type="scientific">Encephalitozoon cuniculi (strain GB-M1)</name>
    <name type="common">Microsporidian parasite</name>
    <dbReference type="NCBI Taxonomy" id="284813"/>
    <lineage>
        <taxon>Eukaryota</taxon>
        <taxon>Fungi</taxon>
        <taxon>Fungi incertae sedis</taxon>
        <taxon>Microsporidia</taxon>
        <taxon>Unikaryonidae</taxon>
        <taxon>Encephalitozoon</taxon>
    </lineage>
</organism>
<proteinExistence type="evidence at protein level"/>
<keyword id="KW-0963">Cytoplasm</keyword>
<keyword id="KW-0539">Nucleus</keyword>
<keyword id="KW-0647">Proteasome</keyword>
<keyword id="KW-1185">Reference proteome</keyword>
<keyword id="KW-0677">Repeat</keyword>
<name>RPN1_ENCCU</name>
<sequence>MEEGELKIIVERIQDPDIDIQNNALNMLFDVTKSSHSKSIDTINFQYLADNLDVLEDVCKRLEGNKKRWLCDIISAICVVDDERKLLAYRVEGNIIDLKEWGHLYVKKLIGCIADVKNNKMDFPFAKTRDVGRECIDFLFKHNAEFEAIDFLVEVGGIETVLDYVDTHNYNRIVLYLEDMNSFVDLEEVILKIYLKMGDHSRYVVGLIRRQKSKEAIEYVRSIEDRDYKKQCLYILARCNLYYEASDPEEKYILSNGYIKDVYREIGAELEIDKPSKMDAILKGFKYDKDTRQLASIGIANGFVHMGYGRDPIFLPQEGDSRVPLDYEAILGCDVPDLISVFGSIGVIESWNSEKVMETLQEHIFADFSYRKTGSLLGLALSGLRNFEERPAILALLSNNLQSSSSIHVIATLLGIEAMFSGTQAEEVRELLQPLMFSDSSEVVFFTSFTLGSVFCGSADEDLTSLMLQTFVEKGKESETQFFRFLMLGLASLFYRRKDVECGIMEIGGALSKHESILIKGFQYVGTGDSNVIESILTDSFTGDTDALLESLGLLSCALVSMGDETSSQMVGRIVSSSLLLDSSHLRSVLPLCYSILYPSNPQVNVLDMLEKSLNIGETNCIISTIVSLGLIGAGTLNSRITKILDQQYSYYYKDSKVLPVLKIAQGLVSLGKGLLSISPLYFDKTTFMPKNTIGLFSTVFMLLDSSISPLVSSHAYMFFLLCQACTQKYVTCSEKINIRVGHPINTVGMVGEPKKLSSVQTHTSPVVLSEKIRAETDENVCSSYIEDVLILKKN</sequence>
<evidence type="ECO:0000250" key="1"/>
<evidence type="ECO:0000269" key="2">
    <source>
    </source>
</evidence>
<evidence type="ECO:0000305" key="3"/>
<protein>
    <recommendedName>
        <fullName>26S proteasome regulatory subunit RPN1</fullName>
    </recommendedName>
</protein>
<dbReference type="EMBL" id="AL590444">
    <property type="protein sequence ID" value="CAD25218.1"/>
    <property type="molecule type" value="Genomic_DNA"/>
</dbReference>
<dbReference type="RefSeq" id="NP_584714.1">
    <property type="nucleotide sequence ID" value="NM_001041064.1"/>
</dbReference>
<dbReference type="SMR" id="Q8SS65"/>
<dbReference type="FunCoup" id="Q8SS65">
    <property type="interactions" value="362"/>
</dbReference>
<dbReference type="STRING" id="284813.Q8SS65"/>
<dbReference type="GeneID" id="858862"/>
<dbReference type="KEGG" id="ecu:ECU04_0310"/>
<dbReference type="VEuPathDB" id="MicrosporidiaDB:ECU04_0310"/>
<dbReference type="HOGENOM" id="CLU_019273_0_0_1"/>
<dbReference type="InParanoid" id="Q8SS65"/>
<dbReference type="OMA" id="LNYRMIG"/>
<dbReference type="OrthoDB" id="10252509at2759"/>
<dbReference type="Proteomes" id="UP000000819">
    <property type="component" value="Chromosome IV"/>
</dbReference>
<dbReference type="GO" id="GO:0005634">
    <property type="term" value="C:nucleus"/>
    <property type="evidence" value="ECO:0007669"/>
    <property type="project" value="UniProtKB-SubCell"/>
</dbReference>
<dbReference type="GO" id="GO:0008540">
    <property type="term" value="C:proteasome regulatory particle, base subcomplex"/>
    <property type="evidence" value="ECO:0007669"/>
    <property type="project" value="TreeGrafter"/>
</dbReference>
<dbReference type="GO" id="GO:0034515">
    <property type="term" value="C:proteasome storage granule"/>
    <property type="evidence" value="ECO:0007669"/>
    <property type="project" value="TreeGrafter"/>
</dbReference>
<dbReference type="GO" id="GO:0043161">
    <property type="term" value="P:proteasome-mediated ubiquitin-dependent protein catabolic process"/>
    <property type="evidence" value="ECO:0007669"/>
    <property type="project" value="TreeGrafter"/>
</dbReference>
<dbReference type="Gene3D" id="1.25.10.10">
    <property type="entry name" value="Leucine-rich Repeat Variant"/>
    <property type="match status" value="1"/>
</dbReference>
<dbReference type="InterPro" id="IPR011989">
    <property type="entry name" value="ARM-like"/>
</dbReference>
<dbReference type="InterPro" id="IPR016024">
    <property type="entry name" value="ARM-type_fold"/>
</dbReference>
<dbReference type="InterPro" id="IPR002015">
    <property type="entry name" value="Proteasome/cyclosome_rpt"/>
</dbReference>
<dbReference type="InterPro" id="IPR041433">
    <property type="entry name" value="RPN1_C"/>
</dbReference>
<dbReference type="InterPro" id="IPR040892">
    <property type="entry name" value="RPN1_N"/>
</dbReference>
<dbReference type="PANTHER" id="PTHR10943">
    <property type="entry name" value="26S PROTEASOME NON-ATPASE REGULATORY SUBUNIT"/>
    <property type="match status" value="1"/>
</dbReference>
<dbReference type="PANTHER" id="PTHR10943:SF1">
    <property type="entry name" value="26S PROTEASOME NON-ATPASE REGULATORY SUBUNIT 2"/>
    <property type="match status" value="1"/>
</dbReference>
<dbReference type="Pfam" id="PF01851">
    <property type="entry name" value="PC_rep"/>
    <property type="match status" value="1"/>
</dbReference>
<dbReference type="Pfam" id="PF18051">
    <property type="entry name" value="RPN1_C"/>
    <property type="match status" value="1"/>
</dbReference>
<dbReference type="Pfam" id="PF17781">
    <property type="entry name" value="RPN1_RPN2_N"/>
    <property type="match status" value="1"/>
</dbReference>
<dbReference type="SUPFAM" id="SSF48371">
    <property type="entry name" value="ARM repeat"/>
    <property type="match status" value="1"/>
</dbReference>
<comment type="function">
    <text evidence="1">Acts as a regulatory subunit of the 26S proteasome which degrades poly-ubiquitinated proteins in the cytoplasm and in the nucleus. It is essential for the regulated turnover of proteins and for the removal of misfolded proteins. The proteasome is a multicatalytic proteinase complex that is characterized by its ability to cleave peptides with Arg, Phe, Tyr, Leu, and Glu adjacent to the leaving group at neutral or slightly basic pH (By similarity).</text>
</comment>
<comment type="subunit">
    <text evidence="1">The 26S proteasome consists of a 20S proteasome core and two 19S regulatory subunits. The 20S proteasome core is composed of 28 subunits that are arranged in four stacked rings, resulting in a barrel-shaped structure. The two end rings are each formed by seven alpha subunits, and the two central rings are each formed by seven beta subunits. The catalytic chamber with the active sites is on the inside of the barrel (By similarity).</text>
</comment>
<comment type="subcellular location">
    <subcellularLocation>
        <location evidence="1">Cytoplasm</location>
    </subcellularLocation>
    <subcellularLocation>
        <location evidence="1">Nucleus</location>
    </subcellularLocation>
</comment>
<comment type="developmental stage">
    <text evidence="2">Expressed in late sporogonial stages.</text>
</comment>
<comment type="similarity">
    <text evidence="3">Belongs to the proteasome subunit S2 family.</text>
</comment>
<accession>Q8SS65</accession>
<reference key="1">
    <citation type="journal article" date="2001" name="Nature">
        <title>Genome sequence and gene compaction of the eukaryote parasite Encephalitozoon cuniculi.</title>
        <authorList>
            <person name="Katinka M.D."/>
            <person name="Duprat S."/>
            <person name="Cornillot E."/>
            <person name="Metenier G."/>
            <person name="Thomarat F."/>
            <person name="Prensier G."/>
            <person name="Barbe V."/>
            <person name="Peyretaillade E."/>
            <person name="Brottier P."/>
            <person name="Wincker P."/>
            <person name="Delbac F."/>
            <person name="El Alaoui H."/>
            <person name="Peyret P."/>
            <person name="Saurin W."/>
            <person name="Gouy M."/>
            <person name="Weissenbach J."/>
            <person name="Vivares C.P."/>
        </authorList>
    </citation>
    <scope>NUCLEOTIDE SEQUENCE [LARGE SCALE GENOMIC DNA]</scope>
    <source>
        <strain>GB-M1</strain>
    </source>
</reference>
<reference key="2">
    <citation type="journal article" date="2006" name="Proteomics">
        <title>Proteomic analysis of the eukaryotic parasite Encephalitozoon cuniculi (microsporidia): a reference map for proteins expressed in late sporogonial stages.</title>
        <authorList>
            <person name="Brosson D."/>
            <person name="Kuhn L."/>
            <person name="Delbac F."/>
            <person name="Garin J."/>
            <person name="Vivares C.P."/>
            <person name="Texier C."/>
        </authorList>
    </citation>
    <scope>IDENTIFICATION BY MASS SPECTROMETRY [LARGE SCALE ANALYSIS]</scope>
    <scope>DEVELOPMENTAL STAGE</scope>
</reference>
<gene>
    <name type="primary">RPN1</name>
    <name type="ordered locus">ECU04_0310</name>
</gene>